<dbReference type="EMBL" id="CP000816">
    <property type="protein sequence ID" value="ABU81372.1"/>
    <property type="molecule type" value="Genomic_DNA"/>
</dbReference>
<dbReference type="RefSeq" id="WP_011998224.1">
    <property type="nucleotide sequence ID" value="NC_009776.1"/>
</dbReference>
<dbReference type="SMR" id="A8A8X0"/>
<dbReference type="STRING" id="453591.Igni_0188"/>
<dbReference type="GeneID" id="5562229"/>
<dbReference type="KEGG" id="iho:Igni_0188"/>
<dbReference type="eggNOG" id="arCOG04245">
    <property type="taxonomic scope" value="Archaea"/>
</dbReference>
<dbReference type="HOGENOM" id="CLU_058171_3_0_2"/>
<dbReference type="OrthoDB" id="371797at2157"/>
<dbReference type="PhylomeDB" id="A8A8X0"/>
<dbReference type="Proteomes" id="UP000000262">
    <property type="component" value="Chromosome"/>
</dbReference>
<dbReference type="GO" id="GO:0015935">
    <property type="term" value="C:small ribosomal subunit"/>
    <property type="evidence" value="ECO:0007669"/>
    <property type="project" value="InterPro"/>
</dbReference>
<dbReference type="GO" id="GO:0003735">
    <property type="term" value="F:structural constituent of ribosome"/>
    <property type="evidence" value="ECO:0007669"/>
    <property type="project" value="InterPro"/>
</dbReference>
<dbReference type="GO" id="GO:0006412">
    <property type="term" value="P:translation"/>
    <property type="evidence" value="ECO:0007669"/>
    <property type="project" value="UniProtKB-UniRule"/>
</dbReference>
<dbReference type="CDD" id="cd01425">
    <property type="entry name" value="RPS2"/>
    <property type="match status" value="1"/>
</dbReference>
<dbReference type="FunFam" id="3.40.50.10490:FF:000030">
    <property type="entry name" value="30S ribosomal protein S2"/>
    <property type="match status" value="1"/>
</dbReference>
<dbReference type="Gene3D" id="3.40.50.10490">
    <property type="entry name" value="Glucose-6-phosphate isomerase like protein, domain 1"/>
    <property type="match status" value="1"/>
</dbReference>
<dbReference type="HAMAP" id="MF_00291_A">
    <property type="entry name" value="Ribosomal_uS2_A"/>
    <property type="match status" value="1"/>
</dbReference>
<dbReference type="InterPro" id="IPR001865">
    <property type="entry name" value="Ribosomal_uS2"/>
</dbReference>
<dbReference type="InterPro" id="IPR023454">
    <property type="entry name" value="Ribosomal_uS2_arc"/>
</dbReference>
<dbReference type="InterPro" id="IPR018130">
    <property type="entry name" value="Ribosomal_uS2_CS"/>
</dbReference>
<dbReference type="InterPro" id="IPR005707">
    <property type="entry name" value="Ribosomal_uS2_euk/arc"/>
</dbReference>
<dbReference type="InterPro" id="IPR023591">
    <property type="entry name" value="Ribosomal_uS2_flav_dom_sf"/>
</dbReference>
<dbReference type="NCBIfam" id="TIGR01012">
    <property type="entry name" value="uS2_euk_arch"/>
    <property type="match status" value="1"/>
</dbReference>
<dbReference type="PANTHER" id="PTHR11489">
    <property type="entry name" value="40S RIBOSOMAL PROTEIN SA"/>
    <property type="match status" value="1"/>
</dbReference>
<dbReference type="Pfam" id="PF00318">
    <property type="entry name" value="Ribosomal_S2"/>
    <property type="match status" value="2"/>
</dbReference>
<dbReference type="PRINTS" id="PR00395">
    <property type="entry name" value="RIBOSOMALS2"/>
</dbReference>
<dbReference type="SUPFAM" id="SSF52313">
    <property type="entry name" value="Ribosomal protein S2"/>
    <property type="match status" value="1"/>
</dbReference>
<dbReference type="PROSITE" id="PS00963">
    <property type="entry name" value="RIBOSOMAL_S2_2"/>
    <property type="match status" value="1"/>
</dbReference>
<accession>A8A8X0</accession>
<organism>
    <name type="scientific">Ignicoccus hospitalis (strain KIN4/I / DSM 18386 / JCM 14125)</name>
    <dbReference type="NCBI Taxonomy" id="453591"/>
    <lineage>
        <taxon>Archaea</taxon>
        <taxon>Thermoproteota</taxon>
        <taxon>Thermoprotei</taxon>
        <taxon>Desulfurococcales</taxon>
        <taxon>Desulfurococcaceae</taxon>
        <taxon>Ignicoccus</taxon>
    </lineage>
</organism>
<name>RS2_IGNH4</name>
<proteinExistence type="inferred from homology"/>
<feature type="chain" id="PRO_0000352057" description="Small ribosomal subunit protein uS2">
    <location>
        <begin position="1"/>
        <end position="212"/>
    </location>
</feature>
<feature type="region of interest" description="Disordered" evidence="2">
    <location>
        <begin position="190"/>
        <end position="212"/>
    </location>
</feature>
<comment type="similarity">
    <text evidence="1">Belongs to the universal ribosomal protein uS2 family.</text>
</comment>
<gene>
    <name evidence="1" type="primary">rps2</name>
    <name type="ordered locus">Igni_0188</name>
</gene>
<sequence length="212" mass="23912">MSAETGEKVVELLIPLEMYLQHGVHIGTKMVTNYMKRFVYKRRNIDGLAILDVRKIDQRIRVAAKFLSRFEPEKIMVVSVRQYGHKPVTMFAQFTGAKPVIGRFVPGTLTNPALEVYYEPDVILVTDTRMDQQAIVEAAEIGIPVVAICDTDNKTENVDLIIPGNNKGRKSLALLYWLLTRQVLVERGQLSPDAPEDQPAPVSEFETKVKMV</sequence>
<keyword id="KW-1185">Reference proteome</keyword>
<keyword id="KW-0687">Ribonucleoprotein</keyword>
<keyword id="KW-0689">Ribosomal protein</keyword>
<protein>
    <recommendedName>
        <fullName evidence="1">Small ribosomal subunit protein uS2</fullName>
    </recommendedName>
    <alternativeName>
        <fullName evidence="3">30S ribosomal protein S2</fullName>
    </alternativeName>
</protein>
<reference key="1">
    <citation type="journal article" date="2008" name="Genome Biol.">
        <title>A genomic analysis of the archaeal system Ignicoccus hospitalis-Nanoarchaeum equitans.</title>
        <authorList>
            <person name="Podar M."/>
            <person name="Anderson I."/>
            <person name="Makarova K.S."/>
            <person name="Elkins J.G."/>
            <person name="Ivanova N."/>
            <person name="Wall M.A."/>
            <person name="Lykidis A."/>
            <person name="Mavromatis K."/>
            <person name="Sun H."/>
            <person name="Hudson M.E."/>
            <person name="Chen W."/>
            <person name="Deciu C."/>
            <person name="Hutchison D."/>
            <person name="Eads J.R."/>
            <person name="Anderson A."/>
            <person name="Fernandes F."/>
            <person name="Szeto E."/>
            <person name="Lapidus A."/>
            <person name="Kyrpides N.C."/>
            <person name="Saier M.H. Jr."/>
            <person name="Richardson P.M."/>
            <person name="Rachel R."/>
            <person name="Huber H."/>
            <person name="Eisen J.A."/>
            <person name="Koonin E.V."/>
            <person name="Keller M."/>
            <person name="Stetter K.O."/>
        </authorList>
    </citation>
    <scope>NUCLEOTIDE SEQUENCE [LARGE SCALE GENOMIC DNA]</scope>
    <source>
        <strain>KIN4/I / DSM 18386 / JCM 14125</strain>
    </source>
</reference>
<evidence type="ECO:0000255" key="1">
    <source>
        <dbReference type="HAMAP-Rule" id="MF_00291"/>
    </source>
</evidence>
<evidence type="ECO:0000256" key="2">
    <source>
        <dbReference type="SAM" id="MobiDB-lite"/>
    </source>
</evidence>
<evidence type="ECO:0000305" key="3"/>